<sequence>MRLLFLLFILLVCLAQTTSGRKRNSKFRPCEKMGGICKSQKTHGCSILPAECKSRYKHCCRL</sequence>
<dbReference type="EMBL" id="DQ012041">
    <property type="protein sequence ID" value="AAY59777.1"/>
    <property type="molecule type" value="mRNA"/>
</dbReference>
<dbReference type="EMBL" id="BC145764">
    <property type="protein sequence ID" value="AAI45765.1"/>
    <property type="molecule type" value="mRNA"/>
</dbReference>
<dbReference type="EMBL" id="BC145766">
    <property type="protein sequence ID" value="AAI45767.1"/>
    <property type="molecule type" value="mRNA"/>
</dbReference>
<dbReference type="CCDS" id="CCDS57609.1"/>
<dbReference type="RefSeq" id="NP_001034208.1">
    <property type="nucleotide sequence ID" value="NM_001039119.2"/>
</dbReference>
<dbReference type="SMR" id="Q30KN3"/>
<dbReference type="FunCoup" id="Q30KN3">
    <property type="interactions" value="68"/>
</dbReference>
<dbReference type="STRING" id="10090.ENSMUSP00000096507"/>
<dbReference type="PaxDb" id="10090-ENSMUSP00000096507"/>
<dbReference type="Ensembl" id="ENSMUST00000098908.4">
    <property type="protein sequence ID" value="ENSMUSP00000096507.4"/>
    <property type="gene ID" value="ENSMUSG00000074454.4"/>
</dbReference>
<dbReference type="GeneID" id="654453"/>
<dbReference type="KEGG" id="mmu:654453"/>
<dbReference type="UCSC" id="uc009oah.2">
    <property type="organism name" value="mouse"/>
</dbReference>
<dbReference type="AGR" id="MGI:3647176"/>
<dbReference type="CTD" id="654453"/>
<dbReference type="MGI" id="MGI:3647176">
    <property type="gene designation" value="Defb33"/>
</dbReference>
<dbReference type="VEuPathDB" id="HostDB:ENSMUSG00000074454"/>
<dbReference type="eggNOG" id="ENOG502TDWQ">
    <property type="taxonomic scope" value="Eukaryota"/>
</dbReference>
<dbReference type="GeneTree" id="ENSGT00400000023630"/>
<dbReference type="HOGENOM" id="CLU_2921888_0_0_1"/>
<dbReference type="InParanoid" id="Q30KN3"/>
<dbReference type="OMA" id="FLECEKM"/>
<dbReference type="OrthoDB" id="9603145at2759"/>
<dbReference type="PhylomeDB" id="Q30KN3"/>
<dbReference type="BioGRID-ORCS" id="654453">
    <property type="hits" value="0 hits in 77 CRISPR screens"/>
</dbReference>
<dbReference type="PRO" id="PR:Q30KN3"/>
<dbReference type="Proteomes" id="UP000000589">
    <property type="component" value="Chromosome 8"/>
</dbReference>
<dbReference type="RNAct" id="Q30KN3">
    <property type="molecule type" value="protein"/>
</dbReference>
<dbReference type="Bgee" id="ENSMUSG00000074454">
    <property type="expression patterns" value="Expressed in testis and 7 other cell types or tissues"/>
</dbReference>
<dbReference type="GO" id="GO:0005576">
    <property type="term" value="C:extracellular region"/>
    <property type="evidence" value="ECO:0007669"/>
    <property type="project" value="UniProtKB-SubCell"/>
</dbReference>
<dbReference type="GO" id="GO:0042742">
    <property type="term" value="P:defense response to bacterium"/>
    <property type="evidence" value="ECO:0007669"/>
    <property type="project" value="UniProtKB-KW"/>
</dbReference>
<dbReference type="PANTHER" id="PTHR20515">
    <property type="entry name" value="BETA-DEFENSIN"/>
    <property type="match status" value="1"/>
</dbReference>
<dbReference type="PANTHER" id="PTHR20515:SF4">
    <property type="entry name" value="BETA-DEFENSIN 33"/>
    <property type="match status" value="1"/>
</dbReference>
<name>DFB33_MOUSE</name>
<keyword id="KW-0044">Antibiotic</keyword>
<keyword id="KW-0929">Antimicrobial</keyword>
<keyword id="KW-0211">Defensin</keyword>
<keyword id="KW-1015">Disulfide bond</keyword>
<keyword id="KW-1185">Reference proteome</keyword>
<keyword id="KW-0964">Secreted</keyword>
<keyword id="KW-0732">Signal</keyword>
<organism>
    <name type="scientific">Mus musculus</name>
    <name type="common">Mouse</name>
    <dbReference type="NCBI Taxonomy" id="10090"/>
    <lineage>
        <taxon>Eukaryota</taxon>
        <taxon>Metazoa</taxon>
        <taxon>Chordata</taxon>
        <taxon>Craniata</taxon>
        <taxon>Vertebrata</taxon>
        <taxon>Euteleostomi</taxon>
        <taxon>Mammalia</taxon>
        <taxon>Eutheria</taxon>
        <taxon>Euarchontoglires</taxon>
        <taxon>Glires</taxon>
        <taxon>Rodentia</taxon>
        <taxon>Myomorpha</taxon>
        <taxon>Muroidea</taxon>
        <taxon>Muridae</taxon>
        <taxon>Murinae</taxon>
        <taxon>Mus</taxon>
        <taxon>Mus</taxon>
    </lineage>
</organism>
<reference key="1">
    <citation type="journal article" date="2005" name="Physiol. Genomics">
        <title>Cross-species analysis of the mammalian beta-defensin gene family: presence of syntenic gene clusters and preferential expression in the male reproductive tract.</title>
        <authorList>
            <person name="Patil A.A."/>
            <person name="Cai Y."/>
            <person name="Sang Y."/>
            <person name="Blecha F."/>
            <person name="Zhang G."/>
        </authorList>
    </citation>
    <scope>NUCLEOTIDE SEQUENCE [MRNA]</scope>
</reference>
<reference key="2">
    <citation type="journal article" date="2004" name="Genome Res.">
        <title>The status, quality, and expansion of the NIH full-length cDNA project: the Mammalian Gene Collection (MGC).</title>
        <authorList>
            <consortium name="The MGC Project Team"/>
        </authorList>
    </citation>
    <scope>NUCLEOTIDE SEQUENCE [LARGE SCALE MRNA]</scope>
    <source>
        <tissue>Testis</tissue>
    </source>
</reference>
<proteinExistence type="inferred from homology"/>
<accession>Q30KN3</accession>
<feature type="signal peptide" evidence="2">
    <location>
        <begin position="1"/>
        <end position="20"/>
    </location>
</feature>
<feature type="chain" id="PRO_0000352712" description="Beta-defensin 33">
    <location>
        <begin position="21"/>
        <end position="62"/>
    </location>
</feature>
<feature type="disulfide bond" evidence="1">
    <location>
        <begin position="30"/>
        <end position="59"/>
    </location>
</feature>
<feature type="disulfide bond" evidence="1">
    <location>
        <begin position="37"/>
        <end position="52"/>
    </location>
</feature>
<feature type="disulfide bond" evidence="1">
    <location>
        <begin position="45"/>
        <end position="60"/>
    </location>
</feature>
<protein>
    <recommendedName>
        <fullName>Beta-defensin 33</fullName>
        <shortName>BD-33</shortName>
        <shortName>mBD-33</shortName>
    </recommendedName>
    <alternativeName>
        <fullName>Defensin, beta 33</fullName>
    </alternativeName>
</protein>
<evidence type="ECO:0000250" key="1"/>
<evidence type="ECO:0000255" key="2"/>
<evidence type="ECO:0000305" key="3"/>
<gene>
    <name type="primary">Defb33</name>
</gene>
<comment type="function">
    <text evidence="1">Has antibacterial activity.</text>
</comment>
<comment type="subcellular location">
    <subcellularLocation>
        <location evidence="1">Secreted</location>
    </subcellularLocation>
</comment>
<comment type="similarity">
    <text evidence="3">Belongs to the beta-defensin family.</text>
</comment>